<comment type="function">
    <text evidence="1">Associates with aggregated proteins, together with IbpA, to stabilize and protect them from irreversible denaturation and extensive proteolysis during heat shock and oxidative stress. Aggregated proteins bound to the IbpAB complex are more efficiently refolded and reactivated by the ATP-dependent chaperone systems ClpB and DnaK/DnaJ/GrpE. Its activity is ATP-independent.</text>
</comment>
<comment type="subunit">
    <text evidence="1">Homodimer. Forms homomultimers of about 100-150 subunits at optimal growth temperatures. Conformation changes to oligomers at high temperatures or high ionic concentrations. The decrease in size of the multimers is accompanied by an increase in chaperone activity.</text>
</comment>
<comment type="subcellular location">
    <subcellularLocation>
        <location evidence="1">Cytoplasm</location>
    </subcellularLocation>
</comment>
<comment type="domain">
    <text evidence="1">The N- and C-terminal flexible termini are involved in oligomerization and in the binding of non-native substrate proteins, and are essential for chaperone activity.</text>
</comment>
<comment type="similarity">
    <text evidence="1 2">Belongs to the small heat shock protein (HSP20) family.</text>
</comment>
<proteinExistence type="inferred from homology"/>
<sequence length="142" mass="16084">MRNYDLSPLLRQWIGFDKLANALQNSGESQSFPPYNIEKSDDNHYRITLALAGFRQEDLDIQLEGTRLTVKGTPEQPENEPKWLHQGLVMQPFSLSFTLAENMEVSGATFTNGLLHIDLTRNEPETIAPQRIAINERSALNS</sequence>
<reference key="1">
    <citation type="journal article" date="2009" name="BMC Genomics">
        <title>Pseudogene accumulation in the evolutionary histories of Salmonella enterica serovars Paratyphi A and Typhi.</title>
        <authorList>
            <person name="Holt K.E."/>
            <person name="Thomson N.R."/>
            <person name="Wain J."/>
            <person name="Langridge G.C."/>
            <person name="Hasan R."/>
            <person name="Bhutta Z.A."/>
            <person name="Quail M.A."/>
            <person name="Norbertczak H."/>
            <person name="Walker D."/>
            <person name="Simmonds M."/>
            <person name="White B."/>
            <person name="Bason N."/>
            <person name="Mungall K."/>
            <person name="Dougan G."/>
            <person name="Parkhill J."/>
        </authorList>
    </citation>
    <scope>NUCLEOTIDE SEQUENCE [LARGE SCALE GENOMIC DNA]</scope>
    <source>
        <strain>AKU_12601</strain>
    </source>
</reference>
<accession>B5BIJ1</accession>
<feature type="chain" id="PRO_1000189111" description="Small heat shock protein IbpB">
    <location>
        <begin position="1"/>
        <end position="142"/>
    </location>
</feature>
<feature type="domain" description="sHSP" evidence="2">
    <location>
        <begin position="26"/>
        <end position="137"/>
    </location>
</feature>
<keyword id="KW-0143">Chaperone</keyword>
<keyword id="KW-0963">Cytoplasm</keyword>
<keyword id="KW-0346">Stress response</keyword>
<organism>
    <name type="scientific">Salmonella paratyphi A (strain AKU_12601)</name>
    <dbReference type="NCBI Taxonomy" id="554290"/>
    <lineage>
        <taxon>Bacteria</taxon>
        <taxon>Pseudomonadati</taxon>
        <taxon>Pseudomonadota</taxon>
        <taxon>Gammaproteobacteria</taxon>
        <taxon>Enterobacterales</taxon>
        <taxon>Enterobacteriaceae</taxon>
        <taxon>Salmonella</taxon>
    </lineage>
</organism>
<gene>
    <name evidence="1" type="primary">ibpB</name>
    <name type="ordered locus">SSPA3416</name>
</gene>
<name>IBPB_SALPK</name>
<protein>
    <recommendedName>
        <fullName evidence="1">Small heat shock protein IbpB</fullName>
    </recommendedName>
    <alternativeName>
        <fullName evidence="1">16 kDa heat shock protein B</fullName>
    </alternativeName>
</protein>
<evidence type="ECO:0000255" key="1">
    <source>
        <dbReference type="HAMAP-Rule" id="MF_02001"/>
    </source>
</evidence>
<evidence type="ECO:0000255" key="2">
    <source>
        <dbReference type="PROSITE-ProRule" id="PRU00285"/>
    </source>
</evidence>
<dbReference type="EMBL" id="FM200053">
    <property type="protein sequence ID" value="CAR61688.1"/>
    <property type="molecule type" value="Genomic_DNA"/>
</dbReference>
<dbReference type="RefSeq" id="WP_001246919.1">
    <property type="nucleotide sequence ID" value="NC_011147.1"/>
</dbReference>
<dbReference type="SMR" id="B5BIJ1"/>
<dbReference type="KEGG" id="sek:SSPA3416"/>
<dbReference type="HOGENOM" id="CLU_046737_4_2_6"/>
<dbReference type="Proteomes" id="UP000001869">
    <property type="component" value="Chromosome"/>
</dbReference>
<dbReference type="GO" id="GO:0005737">
    <property type="term" value="C:cytoplasm"/>
    <property type="evidence" value="ECO:0007669"/>
    <property type="project" value="UniProtKB-SubCell"/>
</dbReference>
<dbReference type="GO" id="GO:0050821">
    <property type="term" value="P:protein stabilization"/>
    <property type="evidence" value="ECO:0007669"/>
    <property type="project" value="UniProtKB-UniRule"/>
</dbReference>
<dbReference type="CDD" id="cd06470">
    <property type="entry name" value="ACD_IbpA-B_like"/>
    <property type="match status" value="1"/>
</dbReference>
<dbReference type="Gene3D" id="2.60.40.790">
    <property type="match status" value="1"/>
</dbReference>
<dbReference type="HAMAP" id="MF_02001">
    <property type="entry name" value="HSP20_IbpB"/>
    <property type="match status" value="1"/>
</dbReference>
<dbReference type="InterPro" id="IPR002068">
    <property type="entry name" value="A-crystallin/Hsp20_dom"/>
</dbReference>
<dbReference type="InterPro" id="IPR037913">
    <property type="entry name" value="ACD_IbpA/B"/>
</dbReference>
<dbReference type="InterPro" id="IPR008978">
    <property type="entry name" value="HSP20-like_chaperone"/>
</dbReference>
<dbReference type="InterPro" id="IPR022848">
    <property type="entry name" value="HSP20_IbpB"/>
</dbReference>
<dbReference type="NCBIfam" id="NF008618">
    <property type="entry name" value="PRK11597.1"/>
    <property type="match status" value="1"/>
</dbReference>
<dbReference type="PANTHER" id="PTHR47062">
    <property type="match status" value="1"/>
</dbReference>
<dbReference type="PANTHER" id="PTHR47062:SF2">
    <property type="entry name" value="SMALL HEAT SHOCK PROTEIN IBPB"/>
    <property type="match status" value="1"/>
</dbReference>
<dbReference type="Pfam" id="PF00011">
    <property type="entry name" value="HSP20"/>
    <property type="match status" value="1"/>
</dbReference>
<dbReference type="SUPFAM" id="SSF49764">
    <property type="entry name" value="HSP20-like chaperones"/>
    <property type="match status" value="1"/>
</dbReference>
<dbReference type="PROSITE" id="PS01031">
    <property type="entry name" value="SHSP"/>
    <property type="match status" value="1"/>
</dbReference>